<feature type="chain" id="PRO_0000362017" description="Probable serine/threonine-protein kinase irlB">
    <location>
        <begin position="1"/>
        <end position="1448"/>
    </location>
</feature>
<feature type="domain" description="Protein kinase" evidence="2">
    <location>
        <begin position="1027"/>
        <end position="1293"/>
    </location>
</feature>
<feature type="domain" description="KEN" evidence="3">
    <location>
        <begin position="1296"/>
        <end position="1448"/>
    </location>
</feature>
<feature type="region of interest" description="Disordered" evidence="4">
    <location>
        <begin position="412"/>
        <end position="446"/>
    </location>
</feature>
<feature type="region of interest" description="Disordered" evidence="4">
    <location>
        <begin position="975"/>
        <end position="1008"/>
    </location>
</feature>
<feature type="coiled-coil region" evidence="1">
    <location>
        <begin position="666"/>
        <end position="817"/>
    </location>
</feature>
<feature type="coiled-coil region" evidence="1">
    <location>
        <begin position="887"/>
        <end position="921"/>
    </location>
</feature>
<feature type="coiled-coil region" evidence="1">
    <location>
        <begin position="974"/>
        <end position="1016"/>
    </location>
</feature>
<feature type="compositionally biased region" description="Acidic residues" evidence="4">
    <location>
        <begin position="412"/>
        <end position="423"/>
    </location>
</feature>
<feature type="compositionally biased region" description="Low complexity" evidence="4">
    <location>
        <begin position="428"/>
        <end position="437"/>
    </location>
</feature>
<feature type="compositionally biased region" description="Low complexity" evidence="4">
    <location>
        <begin position="978"/>
        <end position="1008"/>
    </location>
</feature>
<feature type="active site" description="Proton acceptor" evidence="2">
    <location>
        <position position="1151"/>
    </location>
</feature>
<feature type="binding site" evidence="2">
    <location>
        <begin position="1033"/>
        <end position="1041"/>
    </location>
    <ligand>
        <name>ATP</name>
        <dbReference type="ChEBI" id="CHEBI:30616"/>
    </ligand>
</feature>
<feature type="binding site" evidence="2">
    <location>
        <position position="1056"/>
    </location>
    <ligand>
        <name>ATP</name>
        <dbReference type="ChEBI" id="CHEBI:30616"/>
    </ligand>
</feature>
<name>IRLB_DICDI</name>
<gene>
    <name type="primary">irlB-1</name>
    <name type="ORF">DDB_G0273333</name>
</gene>
<gene>
    <name type="primary">irlB-2</name>
    <name type="ORF">DDB_G0273857</name>
</gene>
<sequence length="1448" mass="169401">MNSLLNNLIIDYEYDLIKVHHHIQKNIFIFPFKKQHYHSTVLECLINLCSKLKYDENENLNSLDQFKIIFYNESKFLNKNLKEYLEILKNSKEINKHVICDYFEKDNNGSEEKNQNSSIVFNFLNCFKDYLSMDIIEFIVRGISFQVRSYCNLIKPIEQWKQKTYQQRYQQFKKALHLNNEVYKRIVCNGVWKSEKLDYIYRYKSDQLSLVGIIESDCSDLFISTLLIDSNSYEQLENVWRLICNFDSFSIASKFLIEFFKLDKVNNKLNFSIHPSSDANENYKRTKTSTNSNLSIDLVRLLEFTTTNFSINVAKLLISKFPTFITSIPSRNSLWGIESRSSLNPIENHFRILNCSFDFNNHQIPIDKQKDYINLFTKNLIHFNTEINEIEDLILKERYHISIRSINNNNHDDDDYDDYDDDDDHHSGCNNNNNNNNDGDHNEDENSIKEESLIEFSNYKVDSMISRLLKYNAPSTTIIALLSNLVCNHMGVSQRILILSTLIEEIQMIESLLVQNDSFKTFMLCESMVSTPNRWSKQSIPLVFFAYIGSDILNLKERPMFYKFFDLNPRLLLSIIPVPLIFKTFLSCSDIIRNNFEDDLINFEDDDSSSVNFFGFTSNFSNSDQDYLSALETCFENSNVFNDQQLKQMARKLLTFSKRENQSRIAESELLEELELEEKRKKQKQQEKIKKRLKREKRLKEKQDLLLIKLEKQKEKQLEEQMKKREKKLQKLERKRLYKKLQDDEKQKLIEKQKQKEKEKELSKQKEKEFELLKQKEIDEIKQKSIQEIDEINKNIQQNQLKIDEINKKLEIKEIQNFQLPLLNQQQQQPPPLQLLKQQQQQPSSSLTIQLESITPILEPKNDNVVLLKSSIETPIDSVKKIQSIIEIQLEEENQKKKEMETIDEYEEININKKQINSNMKWGGIGEPSWISVKKDNKKSKSTITTSTTPTTTTPAKVITSQFKNEQTKKLIIENNKKQNLINDNNNNNNNNNNNNNNNNNNNNNNKLNNIIQDEDFVSIGKFKFNRNESNILGRGSNGTLVFKGLWSDKIPVAIKQMQKAFNPLINKEVEALISLTSKNCSNMIRYIDKEEDKLHVYLGLTLCDGSLQNLVESGKLNDFVISSNKSIIELAKDILFGIQFLHSHDIVHNDLNPRNILTLIGKTSNNNNSSNNSFIISDLGLSKMEVESSYSFTSNIPTGQGGYHPFEVLQSKRMTKSVDIFSLGCILFYLLTNGQHPFGNDKLFRIVNIISNKMNLTPLNSNQLACTLIKSMISKDESIRPTIQNVLNHPLFWNLEKKIQFIDAALNLIKEPSNSSYNSKLTKQLNHCDDNDEPFLNDSWNHLIDVTNLLTPTKGSKITISYQYDKVRDLIRFIRNTIAHHKEIKRAIIQQFQNQQSRPNLEVLEYLSSQDSILLYFESKIPNLIHHIYQQLKQYSLTIDYLFNFYN</sequence>
<reference key="1">
    <citation type="journal article" date="2002" name="Nature">
        <title>Sequence and analysis of chromosome 2 of Dictyostelium discoideum.</title>
        <authorList>
            <person name="Gloeckner G."/>
            <person name="Eichinger L."/>
            <person name="Szafranski K."/>
            <person name="Pachebat J.A."/>
            <person name="Bankier A.T."/>
            <person name="Dear P.H."/>
            <person name="Lehmann R."/>
            <person name="Baumgart C."/>
            <person name="Parra G."/>
            <person name="Abril J.F."/>
            <person name="Guigo R."/>
            <person name="Kumpf K."/>
            <person name="Tunggal B."/>
            <person name="Cox E.C."/>
            <person name="Quail M.A."/>
            <person name="Platzer M."/>
            <person name="Rosenthal A."/>
            <person name="Noegel A.A."/>
        </authorList>
    </citation>
    <scope>NUCLEOTIDE SEQUENCE [LARGE SCALE GENOMIC DNA]</scope>
    <source>
        <strain>AX4</strain>
    </source>
</reference>
<reference key="2">
    <citation type="journal article" date="2005" name="Nature">
        <title>The genome of the social amoeba Dictyostelium discoideum.</title>
        <authorList>
            <person name="Eichinger L."/>
            <person name="Pachebat J.A."/>
            <person name="Gloeckner G."/>
            <person name="Rajandream M.A."/>
            <person name="Sucgang R."/>
            <person name="Berriman M."/>
            <person name="Song J."/>
            <person name="Olsen R."/>
            <person name="Szafranski K."/>
            <person name="Xu Q."/>
            <person name="Tunggal B."/>
            <person name="Kummerfeld S."/>
            <person name="Madera M."/>
            <person name="Konfortov B.A."/>
            <person name="Rivero F."/>
            <person name="Bankier A.T."/>
            <person name="Lehmann R."/>
            <person name="Hamlin N."/>
            <person name="Davies R."/>
            <person name="Gaudet P."/>
            <person name="Fey P."/>
            <person name="Pilcher K."/>
            <person name="Chen G."/>
            <person name="Saunders D."/>
            <person name="Sodergren E.J."/>
            <person name="Davis P."/>
            <person name="Kerhornou A."/>
            <person name="Nie X."/>
            <person name="Hall N."/>
            <person name="Anjard C."/>
            <person name="Hemphill L."/>
            <person name="Bason N."/>
            <person name="Farbrother P."/>
            <person name="Desany B."/>
            <person name="Just E."/>
            <person name="Morio T."/>
            <person name="Rost R."/>
            <person name="Churcher C.M."/>
            <person name="Cooper J."/>
            <person name="Haydock S."/>
            <person name="van Driessche N."/>
            <person name="Cronin A."/>
            <person name="Goodhead I."/>
            <person name="Muzny D.M."/>
            <person name="Mourier T."/>
            <person name="Pain A."/>
            <person name="Lu M."/>
            <person name="Harper D."/>
            <person name="Lindsay R."/>
            <person name="Hauser H."/>
            <person name="James K.D."/>
            <person name="Quiles M."/>
            <person name="Madan Babu M."/>
            <person name="Saito T."/>
            <person name="Buchrieser C."/>
            <person name="Wardroper A."/>
            <person name="Felder M."/>
            <person name="Thangavelu M."/>
            <person name="Johnson D."/>
            <person name="Knights A."/>
            <person name="Loulseged H."/>
            <person name="Mungall K.L."/>
            <person name="Oliver K."/>
            <person name="Price C."/>
            <person name="Quail M.A."/>
            <person name="Urushihara H."/>
            <person name="Hernandez J."/>
            <person name="Rabbinowitsch E."/>
            <person name="Steffen D."/>
            <person name="Sanders M."/>
            <person name="Ma J."/>
            <person name="Kohara Y."/>
            <person name="Sharp S."/>
            <person name="Simmonds M.N."/>
            <person name="Spiegler S."/>
            <person name="Tivey A."/>
            <person name="Sugano S."/>
            <person name="White B."/>
            <person name="Walker D."/>
            <person name="Woodward J.R."/>
            <person name="Winckler T."/>
            <person name="Tanaka Y."/>
            <person name="Shaulsky G."/>
            <person name="Schleicher M."/>
            <person name="Weinstock G.M."/>
            <person name="Rosenthal A."/>
            <person name="Cox E.C."/>
            <person name="Chisholm R.L."/>
            <person name="Gibbs R.A."/>
            <person name="Loomis W.F."/>
            <person name="Platzer M."/>
            <person name="Kay R.R."/>
            <person name="Williams J.G."/>
            <person name="Dear P.H."/>
            <person name="Noegel A.A."/>
            <person name="Barrell B.G."/>
            <person name="Kuspa A."/>
        </authorList>
    </citation>
    <scope>NUCLEOTIDE SEQUENCE [LARGE SCALE GENOMIC DNA]</scope>
    <source>
        <strain>AX4</strain>
    </source>
</reference>
<evidence type="ECO:0000255" key="1"/>
<evidence type="ECO:0000255" key="2">
    <source>
        <dbReference type="PROSITE-ProRule" id="PRU00159"/>
    </source>
</evidence>
<evidence type="ECO:0000255" key="3">
    <source>
        <dbReference type="PROSITE-ProRule" id="PRU00725"/>
    </source>
</evidence>
<evidence type="ECO:0000256" key="4">
    <source>
        <dbReference type="SAM" id="MobiDB-lite"/>
    </source>
</evidence>
<evidence type="ECO:0000305" key="5"/>
<comment type="catalytic activity">
    <reaction>
        <text>L-seryl-[protein] + ATP = O-phospho-L-seryl-[protein] + ADP + H(+)</text>
        <dbReference type="Rhea" id="RHEA:17989"/>
        <dbReference type="Rhea" id="RHEA-COMP:9863"/>
        <dbReference type="Rhea" id="RHEA-COMP:11604"/>
        <dbReference type="ChEBI" id="CHEBI:15378"/>
        <dbReference type="ChEBI" id="CHEBI:29999"/>
        <dbReference type="ChEBI" id="CHEBI:30616"/>
        <dbReference type="ChEBI" id="CHEBI:83421"/>
        <dbReference type="ChEBI" id="CHEBI:456216"/>
        <dbReference type="EC" id="2.7.11.1"/>
    </reaction>
</comment>
<comment type="catalytic activity">
    <reaction>
        <text>L-threonyl-[protein] + ATP = O-phospho-L-threonyl-[protein] + ADP + H(+)</text>
        <dbReference type="Rhea" id="RHEA:46608"/>
        <dbReference type="Rhea" id="RHEA-COMP:11060"/>
        <dbReference type="Rhea" id="RHEA-COMP:11605"/>
        <dbReference type="ChEBI" id="CHEBI:15378"/>
        <dbReference type="ChEBI" id="CHEBI:30013"/>
        <dbReference type="ChEBI" id="CHEBI:30616"/>
        <dbReference type="ChEBI" id="CHEBI:61977"/>
        <dbReference type="ChEBI" id="CHEBI:456216"/>
        <dbReference type="EC" id="2.7.11.1"/>
    </reaction>
</comment>
<comment type="similarity">
    <text evidence="2">Belongs to the protein kinase superfamily. Ser/Thr protein kinase family.</text>
</comment>
<comment type="caution">
    <text evidence="5">The gene for this protein is duplicated in strains AX3 and AX4. These strains contain a duplication of a segment of 750 kb of chromosome 2 compared to the corresponding sequence in strain AX2.</text>
</comment>
<proteinExistence type="inferred from homology"/>
<organism>
    <name type="scientific">Dictyostelium discoideum</name>
    <name type="common">Social amoeba</name>
    <dbReference type="NCBI Taxonomy" id="44689"/>
    <lineage>
        <taxon>Eukaryota</taxon>
        <taxon>Amoebozoa</taxon>
        <taxon>Evosea</taxon>
        <taxon>Eumycetozoa</taxon>
        <taxon>Dictyostelia</taxon>
        <taxon>Dictyosteliales</taxon>
        <taxon>Dictyosteliaceae</taxon>
        <taxon>Dictyostelium</taxon>
    </lineage>
</organism>
<protein>
    <recommendedName>
        <fullName>Probable serine/threonine-protein kinase irlB</fullName>
        <ecNumber>2.7.11.1</ecNumber>
    </recommendedName>
    <alternativeName>
        <fullName>Inositol-requiring protein-like protein kinase B</fullName>
    </alternativeName>
</protein>
<keyword id="KW-0067">ATP-binding</keyword>
<keyword id="KW-0175">Coiled coil</keyword>
<keyword id="KW-0418">Kinase</keyword>
<keyword id="KW-0547">Nucleotide-binding</keyword>
<keyword id="KW-1185">Reference proteome</keyword>
<keyword id="KW-0723">Serine/threonine-protein kinase</keyword>
<keyword id="KW-0808">Transferase</keyword>
<accession>Q557G1</accession>
<dbReference type="EC" id="2.7.11.1"/>
<dbReference type="EMBL" id="AAFI02000011">
    <property type="protein sequence ID" value="EAL70619.1"/>
    <property type="molecule type" value="Genomic_DNA"/>
</dbReference>
<dbReference type="EMBL" id="AAFI02000009">
    <property type="protein sequence ID" value="EAL70884.1"/>
    <property type="molecule type" value="Genomic_DNA"/>
</dbReference>
<dbReference type="RefSeq" id="XP_644545.1">
    <property type="nucleotide sequence ID" value="XM_639453.1"/>
</dbReference>
<dbReference type="RefSeq" id="XP_644706.1">
    <property type="nucleotide sequence ID" value="XM_639614.1"/>
</dbReference>
<dbReference type="SMR" id="Q557G1"/>
<dbReference type="STRING" id="44689.Q557G1"/>
<dbReference type="PaxDb" id="44689-DDB0220009"/>
<dbReference type="EnsemblProtists" id="EAL70619">
    <property type="protein sequence ID" value="EAL70619"/>
    <property type="gene ID" value="DDB_G0273857"/>
</dbReference>
<dbReference type="EnsemblProtists" id="EAL70884">
    <property type="protein sequence ID" value="EAL70884"/>
    <property type="gene ID" value="DDB_G0273333"/>
</dbReference>
<dbReference type="GeneID" id="8618805"/>
<dbReference type="GeneID" id="8619171"/>
<dbReference type="KEGG" id="ddi:DDB_G0273333"/>
<dbReference type="KEGG" id="ddi:DDB_G0273857"/>
<dbReference type="dictyBase" id="DDB_G0273333">
    <property type="gene designation" value="irlB-1"/>
</dbReference>
<dbReference type="dictyBase" id="DDB_G0273857">
    <property type="gene designation" value="irlB-2"/>
</dbReference>
<dbReference type="VEuPathDB" id="AmoebaDB:DDB_G0273857"/>
<dbReference type="eggNOG" id="KOG1027">
    <property type="taxonomic scope" value="Eukaryota"/>
</dbReference>
<dbReference type="HOGENOM" id="CLU_251496_0_0_1"/>
<dbReference type="InParanoid" id="Q557G1"/>
<dbReference type="PRO" id="PR:Q557G1"/>
<dbReference type="Proteomes" id="UP000002195">
    <property type="component" value="Chromosome 2"/>
</dbReference>
<dbReference type="GO" id="GO:1990604">
    <property type="term" value="C:IRE1-TRAF2-ASK1 complex"/>
    <property type="evidence" value="ECO:0000318"/>
    <property type="project" value="GO_Central"/>
</dbReference>
<dbReference type="GO" id="GO:0005524">
    <property type="term" value="F:ATP binding"/>
    <property type="evidence" value="ECO:0007669"/>
    <property type="project" value="UniProtKB-KW"/>
</dbReference>
<dbReference type="GO" id="GO:0106310">
    <property type="term" value="F:protein serine kinase activity"/>
    <property type="evidence" value="ECO:0007669"/>
    <property type="project" value="RHEA"/>
</dbReference>
<dbReference type="GO" id="GO:0004674">
    <property type="term" value="F:protein serine/threonine kinase activity"/>
    <property type="evidence" value="ECO:0000318"/>
    <property type="project" value="GO_Central"/>
</dbReference>
<dbReference type="GO" id="GO:0004521">
    <property type="term" value="F:RNA endonuclease activity"/>
    <property type="evidence" value="ECO:0000318"/>
    <property type="project" value="GO_Central"/>
</dbReference>
<dbReference type="GO" id="GO:0051082">
    <property type="term" value="F:unfolded protein binding"/>
    <property type="evidence" value="ECO:0000318"/>
    <property type="project" value="GO_Central"/>
</dbReference>
<dbReference type="GO" id="GO:0036498">
    <property type="term" value="P:IRE1-mediated unfolded protein response"/>
    <property type="evidence" value="ECO:0000318"/>
    <property type="project" value="GO_Central"/>
</dbReference>
<dbReference type="GO" id="GO:0006397">
    <property type="term" value="P:mRNA processing"/>
    <property type="evidence" value="ECO:0007669"/>
    <property type="project" value="InterPro"/>
</dbReference>
<dbReference type="CDD" id="cd10321">
    <property type="entry name" value="RNase_Ire1_like"/>
    <property type="match status" value="1"/>
</dbReference>
<dbReference type="FunFam" id="1.10.510.10:FF:001066">
    <property type="entry name" value="Probable serine/threonine-protein kinase irlE"/>
    <property type="match status" value="1"/>
</dbReference>
<dbReference type="FunFam" id="1.20.1440.180:FF:000008">
    <property type="entry name" value="Probable serine/threonine-protein kinase irlF"/>
    <property type="match status" value="1"/>
</dbReference>
<dbReference type="FunFam" id="3.30.200.20:FF:000077">
    <property type="entry name" value="Putative Serine/threonine-protein kinase/endoribonuclease IRE1"/>
    <property type="match status" value="1"/>
</dbReference>
<dbReference type="Gene3D" id="1.20.1440.180">
    <property type="entry name" value="KEN domain"/>
    <property type="match status" value="1"/>
</dbReference>
<dbReference type="Gene3D" id="3.30.200.20">
    <property type="entry name" value="Phosphorylase Kinase, domain 1"/>
    <property type="match status" value="1"/>
</dbReference>
<dbReference type="Gene3D" id="1.10.510.10">
    <property type="entry name" value="Transferase(Phosphotransferase) domain 1"/>
    <property type="match status" value="1"/>
</dbReference>
<dbReference type="InterPro" id="IPR045133">
    <property type="entry name" value="IRE1/2-like"/>
</dbReference>
<dbReference type="InterPro" id="IPR010513">
    <property type="entry name" value="KEN_dom"/>
</dbReference>
<dbReference type="InterPro" id="IPR038357">
    <property type="entry name" value="KEN_sf"/>
</dbReference>
<dbReference type="InterPro" id="IPR011009">
    <property type="entry name" value="Kinase-like_dom_sf"/>
</dbReference>
<dbReference type="InterPro" id="IPR000719">
    <property type="entry name" value="Prot_kinase_dom"/>
</dbReference>
<dbReference type="PANTHER" id="PTHR13954">
    <property type="entry name" value="IRE1-RELATED"/>
    <property type="match status" value="1"/>
</dbReference>
<dbReference type="PANTHER" id="PTHR13954:SF12">
    <property type="entry name" value="SERINE_THREONINE-PROTEIN KINASE IRLA-RELATED"/>
    <property type="match status" value="1"/>
</dbReference>
<dbReference type="Pfam" id="PF00069">
    <property type="entry name" value="Pkinase"/>
    <property type="match status" value="1"/>
</dbReference>
<dbReference type="Pfam" id="PF06479">
    <property type="entry name" value="Ribonuc_2-5A"/>
    <property type="match status" value="1"/>
</dbReference>
<dbReference type="SUPFAM" id="SSF56112">
    <property type="entry name" value="Protein kinase-like (PK-like)"/>
    <property type="match status" value="1"/>
</dbReference>
<dbReference type="PROSITE" id="PS51392">
    <property type="entry name" value="KEN"/>
    <property type="match status" value="1"/>
</dbReference>
<dbReference type="PROSITE" id="PS50011">
    <property type="entry name" value="PROTEIN_KINASE_DOM"/>
    <property type="match status" value="1"/>
</dbReference>